<comment type="function">
    <text evidence="2">E2 component of the 2-oxoglutarate dehydrogenase (OGDH) complex which catalyzes the second step in the conversion of 2-oxoglutarate to succinyl-CoA and CO(2).</text>
</comment>
<comment type="catalytic activity">
    <reaction evidence="2">
        <text>N(6)-[(R)-dihydrolipoyl]-L-lysyl-[protein] + succinyl-CoA = N(6)-[(R)-S(8)-succinyldihydrolipoyl]-L-lysyl-[protein] + CoA</text>
        <dbReference type="Rhea" id="RHEA:15213"/>
        <dbReference type="Rhea" id="RHEA-COMP:10475"/>
        <dbReference type="Rhea" id="RHEA-COMP:20092"/>
        <dbReference type="ChEBI" id="CHEBI:57287"/>
        <dbReference type="ChEBI" id="CHEBI:57292"/>
        <dbReference type="ChEBI" id="CHEBI:83100"/>
        <dbReference type="ChEBI" id="CHEBI:83120"/>
        <dbReference type="EC" id="2.3.1.61"/>
    </reaction>
</comment>
<comment type="cofactor">
    <cofactor evidence="1">
        <name>(R)-lipoate</name>
        <dbReference type="ChEBI" id="CHEBI:83088"/>
    </cofactor>
    <text evidence="1">Binds 1 lipoyl cofactor covalently.</text>
</comment>
<comment type="pathway">
    <text>Amino-acid degradation; L-lysine degradation via saccharopine pathway; glutaryl-CoA from L-lysine: step 6/6.</text>
</comment>
<comment type="subunit">
    <text evidence="2">Forms a 24-polypeptide structural core with octahedral symmetry. Part of the 2-oxoglutarate dehydrogenase (OGDH) complex composed of E1 (2-oxoglutarate dehydrogenase), E2 (dihydrolipoamide succinyltransferase) and E3 (dihydrolipoamide dehydrogenase); the complex contains multiple copies of the three enzymatic components (E1, E2 and E3).</text>
</comment>
<comment type="similarity">
    <text evidence="6">Belongs to the 2-oxoacid dehydrogenase family.</text>
</comment>
<organism>
    <name type="scientific">Staphylococcus aureus (strain MSSA476)</name>
    <dbReference type="NCBI Taxonomy" id="282459"/>
    <lineage>
        <taxon>Bacteria</taxon>
        <taxon>Bacillati</taxon>
        <taxon>Bacillota</taxon>
        <taxon>Bacilli</taxon>
        <taxon>Bacillales</taxon>
        <taxon>Staphylococcaceae</taxon>
        <taxon>Staphylococcus</taxon>
    </lineage>
</organism>
<accession>Q6G9E9</accession>
<name>ODO2_STAAS</name>
<keyword id="KW-0012">Acyltransferase</keyword>
<keyword id="KW-0450">Lipoyl</keyword>
<keyword id="KW-0808">Transferase</keyword>
<keyword id="KW-0816">Tricarboxylic acid cycle</keyword>
<proteinExistence type="inferred from homology"/>
<protein>
    <recommendedName>
        <fullName>Dihydrolipoyllysine-residue succinyltransferase component of 2-oxoglutarate dehydrogenase complex</fullName>
        <ecNumber evidence="2">2.3.1.61</ecNumber>
    </recommendedName>
    <alternativeName>
        <fullName>2-oxoglutarate dehydrogenase complex component E2</fullName>
        <shortName>OGDC-E2</shortName>
    </alternativeName>
    <alternativeName>
        <fullName>Dihydrolipoamide succinyltransferase component of 2-oxoglutarate dehydrogenase complex</fullName>
    </alternativeName>
</protein>
<gene>
    <name type="primary">odhB</name>
    <name type="synonym">sucB</name>
    <name type="ordered locus">SAS1355</name>
</gene>
<dbReference type="EC" id="2.3.1.61" evidence="2"/>
<dbReference type="EMBL" id="BX571857">
    <property type="protein sequence ID" value="CAG43130.1"/>
    <property type="molecule type" value="Genomic_DNA"/>
</dbReference>
<dbReference type="RefSeq" id="WP_001115440.1">
    <property type="nucleotide sequence ID" value="NC_002953.3"/>
</dbReference>
<dbReference type="SMR" id="Q6G9E9"/>
<dbReference type="KEGG" id="sas:SAS1355"/>
<dbReference type="HOGENOM" id="CLU_016733_0_0_9"/>
<dbReference type="UniPathway" id="UPA00868">
    <property type="reaction ID" value="UER00840"/>
</dbReference>
<dbReference type="GO" id="GO:0005829">
    <property type="term" value="C:cytosol"/>
    <property type="evidence" value="ECO:0007669"/>
    <property type="project" value="TreeGrafter"/>
</dbReference>
<dbReference type="GO" id="GO:0045252">
    <property type="term" value="C:oxoglutarate dehydrogenase complex"/>
    <property type="evidence" value="ECO:0007669"/>
    <property type="project" value="InterPro"/>
</dbReference>
<dbReference type="GO" id="GO:0004149">
    <property type="term" value="F:dihydrolipoyllysine-residue succinyltransferase activity"/>
    <property type="evidence" value="ECO:0007669"/>
    <property type="project" value="UniProtKB-EC"/>
</dbReference>
<dbReference type="GO" id="GO:0033512">
    <property type="term" value="P:L-lysine catabolic process to acetyl-CoA via saccharopine"/>
    <property type="evidence" value="ECO:0007669"/>
    <property type="project" value="UniProtKB-UniPathway"/>
</dbReference>
<dbReference type="GO" id="GO:0006099">
    <property type="term" value="P:tricarboxylic acid cycle"/>
    <property type="evidence" value="ECO:0007669"/>
    <property type="project" value="UniProtKB-KW"/>
</dbReference>
<dbReference type="CDD" id="cd06849">
    <property type="entry name" value="lipoyl_domain"/>
    <property type="match status" value="1"/>
</dbReference>
<dbReference type="FunFam" id="3.30.559.10:FF:000007">
    <property type="entry name" value="Dihydrolipoamide acetyltransferase component of pyruvate dehydrogenase complex"/>
    <property type="match status" value="1"/>
</dbReference>
<dbReference type="Gene3D" id="2.40.50.100">
    <property type="match status" value="1"/>
</dbReference>
<dbReference type="Gene3D" id="3.30.559.10">
    <property type="entry name" value="Chloramphenicol acetyltransferase-like domain"/>
    <property type="match status" value="1"/>
</dbReference>
<dbReference type="Gene3D" id="4.10.320.10">
    <property type="entry name" value="E3-binding domain"/>
    <property type="match status" value="1"/>
</dbReference>
<dbReference type="InterPro" id="IPR003016">
    <property type="entry name" value="2-oxoA_DH_lipoyl-BS"/>
</dbReference>
<dbReference type="InterPro" id="IPR050537">
    <property type="entry name" value="2-oxoacid_dehydrogenase"/>
</dbReference>
<dbReference type="InterPro" id="IPR001078">
    <property type="entry name" value="2-oxoacid_DH_actylTfrase"/>
</dbReference>
<dbReference type="InterPro" id="IPR000089">
    <property type="entry name" value="Biotin_lipoyl"/>
</dbReference>
<dbReference type="InterPro" id="IPR023213">
    <property type="entry name" value="CAT-like_dom_sf"/>
</dbReference>
<dbReference type="InterPro" id="IPR036625">
    <property type="entry name" value="E3-bd_dom_sf"/>
</dbReference>
<dbReference type="InterPro" id="IPR004167">
    <property type="entry name" value="PSBD"/>
</dbReference>
<dbReference type="InterPro" id="IPR011053">
    <property type="entry name" value="Single_hybrid_motif"/>
</dbReference>
<dbReference type="InterPro" id="IPR006255">
    <property type="entry name" value="SucB"/>
</dbReference>
<dbReference type="NCBIfam" id="NF004309">
    <property type="entry name" value="PRK05704.1"/>
    <property type="match status" value="1"/>
</dbReference>
<dbReference type="NCBIfam" id="TIGR01347">
    <property type="entry name" value="sucB"/>
    <property type="match status" value="1"/>
</dbReference>
<dbReference type="PANTHER" id="PTHR43416:SF5">
    <property type="entry name" value="DIHYDROLIPOYLLYSINE-RESIDUE SUCCINYLTRANSFERASE COMPONENT OF 2-OXOGLUTARATE DEHYDROGENASE COMPLEX, MITOCHONDRIAL"/>
    <property type="match status" value="1"/>
</dbReference>
<dbReference type="PANTHER" id="PTHR43416">
    <property type="entry name" value="DIHYDROLIPOYLLYSINE-RESIDUE SUCCINYLTRANSFERASE COMPONENT OF 2-OXOGLUTARATE DEHYDROGENASE COMPLEX, MITOCHONDRIAL-RELATED"/>
    <property type="match status" value="1"/>
</dbReference>
<dbReference type="Pfam" id="PF00198">
    <property type="entry name" value="2-oxoacid_dh"/>
    <property type="match status" value="1"/>
</dbReference>
<dbReference type="Pfam" id="PF00364">
    <property type="entry name" value="Biotin_lipoyl"/>
    <property type="match status" value="1"/>
</dbReference>
<dbReference type="Pfam" id="PF02817">
    <property type="entry name" value="E3_binding"/>
    <property type="match status" value="1"/>
</dbReference>
<dbReference type="SUPFAM" id="SSF52777">
    <property type="entry name" value="CoA-dependent acyltransferases"/>
    <property type="match status" value="1"/>
</dbReference>
<dbReference type="SUPFAM" id="SSF51230">
    <property type="entry name" value="Single hybrid motif"/>
    <property type="match status" value="1"/>
</dbReference>
<dbReference type="PROSITE" id="PS50968">
    <property type="entry name" value="BIOTINYL_LIPOYL"/>
    <property type="match status" value="1"/>
</dbReference>
<dbReference type="PROSITE" id="PS00189">
    <property type="entry name" value="LIPOYL"/>
    <property type="match status" value="1"/>
</dbReference>
<dbReference type="PROSITE" id="PS51826">
    <property type="entry name" value="PSBD"/>
    <property type="match status" value="1"/>
</dbReference>
<reference key="1">
    <citation type="journal article" date="2004" name="Proc. Natl. Acad. Sci. U.S.A.">
        <title>Complete genomes of two clinical Staphylococcus aureus strains: evidence for the rapid evolution of virulence and drug resistance.</title>
        <authorList>
            <person name="Holden M.T.G."/>
            <person name="Feil E.J."/>
            <person name="Lindsay J.A."/>
            <person name="Peacock S.J."/>
            <person name="Day N.P.J."/>
            <person name="Enright M.C."/>
            <person name="Foster T.J."/>
            <person name="Moore C.E."/>
            <person name="Hurst L."/>
            <person name="Atkin R."/>
            <person name="Barron A."/>
            <person name="Bason N."/>
            <person name="Bentley S.D."/>
            <person name="Chillingworth C."/>
            <person name="Chillingworth T."/>
            <person name="Churcher C."/>
            <person name="Clark L."/>
            <person name="Corton C."/>
            <person name="Cronin A."/>
            <person name="Doggett J."/>
            <person name="Dowd L."/>
            <person name="Feltwell T."/>
            <person name="Hance Z."/>
            <person name="Harris B."/>
            <person name="Hauser H."/>
            <person name="Holroyd S."/>
            <person name="Jagels K."/>
            <person name="James K.D."/>
            <person name="Lennard N."/>
            <person name="Line A."/>
            <person name="Mayes R."/>
            <person name="Moule S."/>
            <person name="Mungall K."/>
            <person name="Ormond D."/>
            <person name="Quail M.A."/>
            <person name="Rabbinowitsch E."/>
            <person name="Rutherford K.M."/>
            <person name="Sanders M."/>
            <person name="Sharp S."/>
            <person name="Simmonds M."/>
            <person name="Stevens K."/>
            <person name="Whitehead S."/>
            <person name="Barrell B.G."/>
            <person name="Spratt B.G."/>
            <person name="Parkhill J."/>
        </authorList>
    </citation>
    <scope>NUCLEOTIDE SEQUENCE [LARGE SCALE GENOMIC DNA]</scope>
    <source>
        <strain>MSSA476</strain>
    </source>
</reference>
<evidence type="ECO:0000250" key="1"/>
<evidence type="ECO:0000250" key="2">
    <source>
        <dbReference type="UniProtKB" id="P0AFG6"/>
    </source>
</evidence>
<evidence type="ECO:0000255" key="3">
    <source>
        <dbReference type="PROSITE-ProRule" id="PRU01066"/>
    </source>
</evidence>
<evidence type="ECO:0000255" key="4">
    <source>
        <dbReference type="PROSITE-ProRule" id="PRU01170"/>
    </source>
</evidence>
<evidence type="ECO:0000256" key="5">
    <source>
        <dbReference type="SAM" id="MobiDB-lite"/>
    </source>
</evidence>
<evidence type="ECO:0000305" key="6"/>
<sequence length="422" mass="46673">MPEVKVPELAESITEGTIAEWLKNVGDSVEKGEAILELETDKVNVEVVSEEAGVLSEQLASEGDTVEVGQAIAIIGEGSGNASKENSNDNTPQQNEETNNKKEETTNNSVDKAEVNQANDDNQQRINATPSARRYARENGVNLAEVSPKTNDVVRKEDIDKKQQAPASTQTTQQASAKEEKKYNQYPTKPVIREKMSRRKKTAAKKLLEVSNNTAMLTTFNEVDMTNVMELRKRKKEQFMKDHDGTKLGFMSFFTKASVAALKKYPEVNAEIDGDDMITKQYYDIGVAVSTDDGLLVPFVRDCDKKNFAEIEAEIANLAVKAREKKLGLDDMVNGSFTITNGGIFGSMMSTPIINGNQAAILGMHSIITRPIAIDQDTIENRPMMYIALSYDHRIIDGKEAVGFLKTIKELIENPEDLLLES</sequence>
<feature type="chain" id="PRO_0000288101" description="Dihydrolipoyllysine-residue succinyltransferase component of 2-oxoglutarate dehydrogenase complex">
    <location>
        <begin position="1"/>
        <end position="422"/>
    </location>
</feature>
<feature type="domain" description="Lipoyl-binding" evidence="3">
    <location>
        <begin position="1"/>
        <end position="76"/>
    </location>
</feature>
<feature type="domain" description="Peripheral subunit-binding (PSBD)" evidence="4">
    <location>
        <begin position="127"/>
        <end position="163"/>
    </location>
</feature>
<feature type="region of interest" description="Disordered" evidence="5">
    <location>
        <begin position="77"/>
        <end position="185"/>
    </location>
</feature>
<feature type="compositionally biased region" description="Polar residues" evidence="5">
    <location>
        <begin position="80"/>
        <end position="94"/>
    </location>
</feature>
<feature type="compositionally biased region" description="Polar residues" evidence="5">
    <location>
        <begin position="116"/>
        <end position="130"/>
    </location>
</feature>
<feature type="compositionally biased region" description="Basic and acidic residues" evidence="5">
    <location>
        <begin position="152"/>
        <end position="163"/>
    </location>
</feature>
<feature type="compositionally biased region" description="Low complexity" evidence="5">
    <location>
        <begin position="164"/>
        <end position="176"/>
    </location>
</feature>
<feature type="active site" evidence="2">
    <location>
        <position position="393"/>
    </location>
</feature>
<feature type="active site" evidence="2">
    <location>
        <position position="397"/>
    </location>
</feature>
<feature type="modified residue" description="N6-lipoyllysine" evidence="3">
    <location>
        <position position="42"/>
    </location>
</feature>